<accession>Q9NHP7</accession>
<evidence type="ECO:0000250" key="1"/>
<evidence type="ECO:0000255" key="2">
    <source>
        <dbReference type="PROSITE-ProRule" id="PRU00469"/>
    </source>
</evidence>
<evidence type="ECO:0000305" key="3"/>
<feature type="chain" id="PRO_0000119300" description="Transcription initiation factor IIB">
    <location>
        <begin position="1"/>
        <end position="293"/>
    </location>
</feature>
<feature type="repeat" description="1">
    <location>
        <begin position="101"/>
        <end position="177"/>
    </location>
</feature>
<feature type="repeat" description="2">
    <location>
        <begin position="195"/>
        <end position="271"/>
    </location>
</feature>
<feature type="zinc finger region" description="TFIIB-type" evidence="2">
    <location>
        <begin position="10"/>
        <end position="41"/>
    </location>
</feature>
<feature type="binding site" evidence="2">
    <location>
        <position position="14"/>
    </location>
    <ligand>
        <name>Zn(2+)</name>
        <dbReference type="ChEBI" id="CHEBI:29105"/>
    </ligand>
</feature>
<feature type="binding site" evidence="2">
    <location>
        <position position="17"/>
    </location>
    <ligand>
        <name>Zn(2+)</name>
        <dbReference type="ChEBI" id="CHEBI:29105"/>
    </ligand>
</feature>
<feature type="binding site" evidence="2">
    <location>
        <position position="33"/>
    </location>
    <ligand>
        <name>Zn(2+)</name>
        <dbReference type="ChEBI" id="CHEBI:29105"/>
    </ligand>
</feature>
<feature type="binding site" evidence="2">
    <location>
        <position position="36"/>
    </location>
    <ligand>
        <name>Zn(2+)</name>
        <dbReference type="ChEBI" id="CHEBI:29105"/>
    </ligand>
</feature>
<sequence>MASTSRLENNKVCCYAHPESPLIEDYRAGDMICSECGLVVGDAFGGPENPLLSGGHLSTIIGPGTGSASFDAFGAPKYPNRRTMRSSDRSLISAFKEISSMADRINLPKTIVDRANTLFKQVHDGKNLKGRSNDAKASACLYIACRQEGVPRTFKEICAVSKISKKEIGRCFKLTLKALETSVDLITTADFMCRFCANLDLPNMVQRAATHIAKKAVEMDIVPGRSPISVAAAAIYMASQASEHKRSQKEIGDIAGVADVTIRQSYKLMYPHAAKLFPEDFKFTTPIDQLPQM</sequence>
<keyword id="KW-0479">Metal-binding</keyword>
<keyword id="KW-0539">Nucleus</keyword>
<keyword id="KW-0677">Repeat</keyword>
<keyword id="KW-0804">Transcription</keyword>
<keyword id="KW-0805">Transcription regulation</keyword>
<keyword id="KW-0862">Zinc</keyword>
<keyword id="KW-0863">Zinc-finger</keyword>
<organism>
    <name type="scientific">Drosophila virilis</name>
    <name type="common">Fruit fly</name>
    <dbReference type="NCBI Taxonomy" id="7244"/>
    <lineage>
        <taxon>Eukaryota</taxon>
        <taxon>Metazoa</taxon>
        <taxon>Ecdysozoa</taxon>
        <taxon>Arthropoda</taxon>
        <taxon>Hexapoda</taxon>
        <taxon>Insecta</taxon>
        <taxon>Pterygota</taxon>
        <taxon>Neoptera</taxon>
        <taxon>Endopterygota</taxon>
        <taxon>Diptera</taxon>
        <taxon>Brachycera</taxon>
        <taxon>Muscomorpha</taxon>
        <taxon>Ephydroidea</taxon>
        <taxon>Drosophilidae</taxon>
        <taxon>Drosophila</taxon>
    </lineage>
</organism>
<gene>
    <name type="primary">TfIIB</name>
</gene>
<comment type="function">
    <text evidence="1">General factor that plays a major role in the activation of eukaryotic genes transcribed by RNA polymerase II.</text>
</comment>
<comment type="subunit">
    <text evidence="1">Associates with TFIID-IIA (DA complex) to form TFIID-IIA-IIB (DAB-complex) which is then recognized by polymerase II.</text>
</comment>
<comment type="subcellular location">
    <subcellularLocation>
        <location evidence="1">Nucleus</location>
    </subcellularLocation>
</comment>
<comment type="similarity">
    <text evidence="3">Belongs to the TFIIB family.</text>
</comment>
<proteinExistence type="inferred from homology"/>
<protein>
    <recommendedName>
        <fullName>Transcription initiation factor IIB</fullName>
    </recommendedName>
    <alternativeName>
        <fullName>General transcription factor TFIIB</fullName>
    </alternativeName>
</protein>
<name>TF2B_DROVI</name>
<dbReference type="EMBL" id="AF220260">
    <property type="protein sequence ID" value="AAF71709.1"/>
    <property type="molecule type" value="Genomic_DNA"/>
</dbReference>
<dbReference type="SMR" id="Q9NHP7"/>
<dbReference type="eggNOG" id="KOG1597">
    <property type="taxonomic scope" value="Eukaryota"/>
</dbReference>
<dbReference type="OrthoDB" id="25790at2759"/>
<dbReference type="GO" id="GO:0005634">
    <property type="term" value="C:nucleus"/>
    <property type="evidence" value="ECO:0007669"/>
    <property type="project" value="UniProtKB-SubCell"/>
</dbReference>
<dbReference type="GO" id="GO:0097550">
    <property type="term" value="C:transcription preinitiation complex"/>
    <property type="evidence" value="ECO:0007669"/>
    <property type="project" value="TreeGrafter"/>
</dbReference>
<dbReference type="GO" id="GO:0016251">
    <property type="term" value="F:RNA polymerase II general transcription initiation factor activity"/>
    <property type="evidence" value="ECO:0007669"/>
    <property type="project" value="TreeGrafter"/>
</dbReference>
<dbReference type="GO" id="GO:0017025">
    <property type="term" value="F:TBP-class protein binding"/>
    <property type="evidence" value="ECO:0007669"/>
    <property type="project" value="InterPro"/>
</dbReference>
<dbReference type="GO" id="GO:0008270">
    <property type="term" value="F:zinc ion binding"/>
    <property type="evidence" value="ECO:0007669"/>
    <property type="project" value="UniProtKB-KW"/>
</dbReference>
<dbReference type="GO" id="GO:0006367">
    <property type="term" value="P:transcription initiation at RNA polymerase II promoter"/>
    <property type="evidence" value="ECO:0007669"/>
    <property type="project" value="TreeGrafter"/>
</dbReference>
<dbReference type="GO" id="GO:0070897">
    <property type="term" value="P:transcription preinitiation complex assembly"/>
    <property type="evidence" value="ECO:0007669"/>
    <property type="project" value="InterPro"/>
</dbReference>
<dbReference type="CDD" id="cd20551">
    <property type="entry name" value="CYCLIN_TFIIB_rpt1"/>
    <property type="match status" value="1"/>
</dbReference>
<dbReference type="CDD" id="cd20552">
    <property type="entry name" value="CYCLIN_TFIIB_rpt2"/>
    <property type="match status" value="1"/>
</dbReference>
<dbReference type="FunFam" id="1.10.472.10:FF:000008">
    <property type="entry name" value="Transcription initiation factor IIB"/>
    <property type="match status" value="1"/>
</dbReference>
<dbReference type="FunFam" id="1.10.472.10:FF:000019">
    <property type="entry name" value="transcription initiation factor IIB"/>
    <property type="match status" value="1"/>
</dbReference>
<dbReference type="Gene3D" id="2.20.25.10">
    <property type="match status" value="1"/>
</dbReference>
<dbReference type="Gene3D" id="1.10.472.10">
    <property type="entry name" value="Cyclin-like"/>
    <property type="match status" value="2"/>
</dbReference>
<dbReference type="InterPro" id="IPR013763">
    <property type="entry name" value="Cyclin-like_dom"/>
</dbReference>
<dbReference type="InterPro" id="IPR036915">
    <property type="entry name" value="Cyclin-like_sf"/>
</dbReference>
<dbReference type="InterPro" id="IPR000812">
    <property type="entry name" value="TFIIB"/>
</dbReference>
<dbReference type="InterPro" id="IPR023486">
    <property type="entry name" value="TFIIB_CS"/>
</dbReference>
<dbReference type="InterPro" id="IPR013150">
    <property type="entry name" value="TFIIB_cyclin"/>
</dbReference>
<dbReference type="InterPro" id="IPR013137">
    <property type="entry name" value="Znf_TFIIB"/>
</dbReference>
<dbReference type="PANTHER" id="PTHR11618:SF13">
    <property type="entry name" value="TRANSCRIPTION INITIATION FACTOR IIB"/>
    <property type="match status" value="1"/>
</dbReference>
<dbReference type="PANTHER" id="PTHR11618">
    <property type="entry name" value="TRANSCRIPTION INITIATION FACTOR IIB-RELATED"/>
    <property type="match status" value="1"/>
</dbReference>
<dbReference type="Pfam" id="PF00382">
    <property type="entry name" value="TFIIB"/>
    <property type="match status" value="2"/>
</dbReference>
<dbReference type="PRINTS" id="PR00685">
    <property type="entry name" value="TIFACTORIIB"/>
</dbReference>
<dbReference type="SMART" id="SM00385">
    <property type="entry name" value="CYCLIN"/>
    <property type="match status" value="2"/>
</dbReference>
<dbReference type="SUPFAM" id="SSF47954">
    <property type="entry name" value="Cyclin-like"/>
    <property type="match status" value="2"/>
</dbReference>
<dbReference type="SUPFAM" id="SSF57783">
    <property type="entry name" value="Zinc beta-ribbon"/>
    <property type="match status" value="1"/>
</dbReference>
<dbReference type="PROSITE" id="PS00782">
    <property type="entry name" value="TFIIB"/>
    <property type="match status" value="2"/>
</dbReference>
<dbReference type="PROSITE" id="PS51134">
    <property type="entry name" value="ZF_TFIIB"/>
    <property type="match status" value="1"/>
</dbReference>
<reference key="1">
    <citation type="journal article" date="1999" name="Korean J. Genet.">
        <title>Structure of Drosophila virilis TBP and TFIIB genes and comparison with the Drosophila melanogaster genes.</title>
        <authorList>
            <person name="Oh Y."/>
            <person name="Baek K."/>
            <person name="Yoon J."/>
        </authorList>
    </citation>
    <scope>NUCLEOTIDE SEQUENCE [GENOMIC DNA]</scope>
</reference>